<accession>Q9JYF4</accession>
<keyword id="KW-0963">Cytoplasm</keyword>
<keyword id="KW-0489">Methyltransferase</keyword>
<keyword id="KW-1185">Reference proteome</keyword>
<keyword id="KW-0698">rRNA processing</keyword>
<keyword id="KW-0949">S-adenosyl-L-methionine</keyword>
<keyword id="KW-0808">Transferase</keyword>
<organism>
    <name type="scientific">Neisseria meningitidis serogroup B (strain ATCC BAA-335 / MC58)</name>
    <dbReference type="NCBI Taxonomy" id="122586"/>
    <lineage>
        <taxon>Bacteria</taxon>
        <taxon>Pseudomonadati</taxon>
        <taxon>Pseudomonadota</taxon>
        <taxon>Betaproteobacteria</taxon>
        <taxon>Neisseriales</taxon>
        <taxon>Neisseriaceae</taxon>
        <taxon>Neisseria</taxon>
    </lineage>
</organism>
<feature type="chain" id="PRO_0000212079" description="Ribosomal RNA small subunit methyltransferase J">
    <location>
        <begin position="1"/>
        <end position="250"/>
    </location>
</feature>
<feature type="binding site" evidence="1">
    <location>
        <begin position="96"/>
        <end position="97"/>
    </location>
    <ligand>
        <name>S-adenosyl-L-methionine</name>
        <dbReference type="ChEBI" id="CHEBI:59789"/>
    </ligand>
</feature>
<feature type="binding site" evidence="1">
    <location>
        <position position="168"/>
    </location>
    <ligand>
        <name>S-adenosyl-L-methionine</name>
        <dbReference type="ChEBI" id="CHEBI:59789"/>
    </ligand>
</feature>
<protein>
    <recommendedName>
        <fullName evidence="1">Ribosomal RNA small subunit methyltransferase J</fullName>
        <ecNumber evidence="1">2.1.1.242</ecNumber>
    </recommendedName>
    <alternativeName>
        <fullName evidence="1">16S rRNA m2G1516 methyltransferase</fullName>
    </alternativeName>
    <alternativeName>
        <fullName evidence="1">rRNA (guanine-N(2)-)-methyltransferase</fullName>
    </alternativeName>
</protein>
<evidence type="ECO:0000255" key="1">
    <source>
        <dbReference type="HAMAP-Rule" id="MF_01523"/>
    </source>
</evidence>
<sequence length="250" mass="27286">MTDILIDNTATETVRTLIRAFPLVPVSQPPEQGSYLLAEHDTVSLRLVGEKSSVIVDFASGAAQYRRTKGGGELIAKAVNHTAHPTVWDATAGLGRDSFVLASLGLAVTAFEQHPAVACLLSDGIRRALLNPETQNTAAHINLHFGNAAEQMPALVQTQGKPDIVYLDPMYPERRKSAAVKKEMTYFHRLVGEAQDEAALLHTARQTAKKRVVVKRPRLGEHLAGQDPAYQYTGKSTRFDVYLPYGTDKG</sequence>
<name>RSMJ_NEIMB</name>
<dbReference type="EC" id="2.1.1.242" evidence="1"/>
<dbReference type="EMBL" id="AE002098">
    <property type="protein sequence ID" value="AAF41960.1"/>
    <property type="molecule type" value="Genomic_DNA"/>
</dbReference>
<dbReference type="PIR" id="F81062">
    <property type="entry name" value="F81062"/>
</dbReference>
<dbReference type="RefSeq" id="NP_274614.1">
    <property type="nucleotide sequence ID" value="NC_003112.2"/>
</dbReference>
<dbReference type="RefSeq" id="WP_002225014.1">
    <property type="nucleotide sequence ID" value="NC_003112.2"/>
</dbReference>
<dbReference type="SMR" id="Q9JYF4"/>
<dbReference type="FunCoup" id="Q9JYF4">
    <property type="interactions" value="7"/>
</dbReference>
<dbReference type="STRING" id="122586.NMB1608"/>
<dbReference type="PaxDb" id="122586-NMB1608"/>
<dbReference type="DNASU" id="904305"/>
<dbReference type="KEGG" id="nme:NMB1608"/>
<dbReference type="PATRIC" id="fig|122586.8.peg.2060"/>
<dbReference type="HOGENOM" id="CLU_076324_1_0_4"/>
<dbReference type="InParanoid" id="Q9JYF4"/>
<dbReference type="OrthoDB" id="3191794at2"/>
<dbReference type="Proteomes" id="UP000000425">
    <property type="component" value="Chromosome"/>
</dbReference>
<dbReference type="GO" id="GO:0005737">
    <property type="term" value="C:cytoplasm"/>
    <property type="evidence" value="ECO:0007669"/>
    <property type="project" value="UniProtKB-SubCell"/>
</dbReference>
<dbReference type="GO" id="GO:0036308">
    <property type="term" value="F:16S rRNA (guanine(1516)-N(2))-methyltransferase activity"/>
    <property type="evidence" value="ECO:0000318"/>
    <property type="project" value="GO_Central"/>
</dbReference>
<dbReference type="GO" id="GO:0070475">
    <property type="term" value="P:rRNA base methylation"/>
    <property type="evidence" value="ECO:0000318"/>
    <property type="project" value="GO_Central"/>
</dbReference>
<dbReference type="Gene3D" id="3.40.50.150">
    <property type="entry name" value="Vaccinia Virus protein VP39"/>
    <property type="match status" value="1"/>
</dbReference>
<dbReference type="Gene3D" id="3.40.1630.10">
    <property type="entry name" value="YhiQ-like domain"/>
    <property type="match status" value="1"/>
</dbReference>
<dbReference type="HAMAP" id="MF_01523">
    <property type="entry name" value="16SrRNA_methyltr_J"/>
    <property type="match status" value="1"/>
</dbReference>
<dbReference type="InterPro" id="IPR007536">
    <property type="entry name" value="16SrRNA_methylTrfase_J"/>
</dbReference>
<dbReference type="InterPro" id="IPR029063">
    <property type="entry name" value="SAM-dependent_MTases_sf"/>
</dbReference>
<dbReference type="PANTHER" id="PTHR36112">
    <property type="entry name" value="RIBOSOMAL RNA SMALL SUBUNIT METHYLTRANSFERASE J"/>
    <property type="match status" value="1"/>
</dbReference>
<dbReference type="PANTHER" id="PTHR36112:SF1">
    <property type="entry name" value="RIBOSOMAL RNA SMALL SUBUNIT METHYLTRANSFERASE J"/>
    <property type="match status" value="1"/>
</dbReference>
<dbReference type="Pfam" id="PF04445">
    <property type="entry name" value="SAM_MT"/>
    <property type="match status" value="1"/>
</dbReference>
<dbReference type="SUPFAM" id="SSF53335">
    <property type="entry name" value="S-adenosyl-L-methionine-dependent methyltransferases"/>
    <property type="match status" value="1"/>
</dbReference>
<proteinExistence type="inferred from homology"/>
<reference key="1">
    <citation type="journal article" date="2000" name="Science">
        <title>Complete genome sequence of Neisseria meningitidis serogroup B strain MC58.</title>
        <authorList>
            <person name="Tettelin H."/>
            <person name="Saunders N.J."/>
            <person name="Heidelberg J.F."/>
            <person name="Jeffries A.C."/>
            <person name="Nelson K.E."/>
            <person name="Eisen J.A."/>
            <person name="Ketchum K.A."/>
            <person name="Hood D.W."/>
            <person name="Peden J.F."/>
            <person name="Dodson R.J."/>
            <person name="Nelson W.C."/>
            <person name="Gwinn M.L."/>
            <person name="DeBoy R.T."/>
            <person name="Peterson J.D."/>
            <person name="Hickey E.K."/>
            <person name="Haft D.H."/>
            <person name="Salzberg S.L."/>
            <person name="White O."/>
            <person name="Fleischmann R.D."/>
            <person name="Dougherty B.A."/>
            <person name="Mason T.M."/>
            <person name="Ciecko A."/>
            <person name="Parksey D.S."/>
            <person name="Blair E."/>
            <person name="Cittone H."/>
            <person name="Clark E.B."/>
            <person name="Cotton M.D."/>
            <person name="Utterback T.R."/>
            <person name="Khouri H.M."/>
            <person name="Qin H."/>
            <person name="Vamathevan J.J."/>
            <person name="Gill J."/>
            <person name="Scarlato V."/>
            <person name="Masignani V."/>
            <person name="Pizza M."/>
            <person name="Grandi G."/>
            <person name="Sun L."/>
            <person name="Smith H.O."/>
            <person name="Fraser C.M."/>
            <person name="Moxon E.R."/>
            <person name="Rappuoli R."/>
            <person name="Venter J.C."/>
        </authorList>
    </citation>
    <scope>NUCLEOTIDE SEQUENCE [LARGE SCALE GENOMIC DNA]</scope>
    <source>
        <strain>ATCC BAA-335 / MC58</strain>
    </source>
</reference>
<gene>
    <name evidence="1" type="primary">rsmJ</name>
    <name type="ordered locus">NMB1608</name>
</gene>
<comment type="function">
    <text evidence="1">Specifically methylates the guanosine in position 1516 of 16S rRNA.</text>
</comment>
<comment type="catalytic activity">
    <reaction evidence="1">
        <text>guanosine(1516) in 16S rRNA + S-adenosyl-L-methionine = N(2)-methylguanosine(1516) in 16S rRNA + S-adenosyl-L-homocysteine + H(+)</text>
        <dbReference type="Rhea" id="RHEA:43220"/>
        <dbReference type="Rhea" id="RHEA-COMP:10412"/>
        <dbReference type="Rhea" id="RHEA-COMP:10413"/>
        <dbReference type="ChEBI" id="CHEBI:15378"/>
        <dbReference type="ChEBI" id="CHEBI:57856"/>
        <dbReference type="ChEBI" id="CHEBI:59789"/>
        <dbReference type="ChEBI" id="CHEBI:74269"/>
        <dbReference type="ChEBI" id="CHEBI:74481"/>
        <dbReference type="EC" id="2.1.1.242"/>
    </reaction>
</comment>
<comment type="subcellular location">
    <subcellularLocation>
        <location evidence="1">Cytoplasm</location>
    </subcellularLocation>
</comment>
<comment type="similarity">
    <text evidence="1">Belongs to the methyltransferase superfamily. RsmJ family.</text>
</comment>